<comment type="function">
    <text evidence="1">Catalyzes the transfer of an acetyl group from acetyl-CoA to tetrahydrodipicolinate.</text>
</comment>
<comment type="catalytic activity">
    <reaction evidence="1">
        <text>(S)-2,3,4,5-tetrahydrodipicolinate + acetyl-CoA + H2O = L-2-acetamido-6-oxoheptanedioate + CoA</text>
        <dbReference type="Rhea" id="RHEA:13085"/>
        <dbReference type="ChEBI" id="CHEBI:15377"/>
        <dbReference type="ChEBI" id="CHEBI:16845"/>
        <dbReference type="ChEBI" id="CHEBI:57287"/>
        <dbReference type="ChEBI" id="CHEBI:57288"/>
        <dbReference type="ChEBI" id="CHEBI:58117"/>
        <dbReference type="EC" id="2.3.1.89"/>
    </reaction>
</comment>
<comment type="pathway">
    <text evidence="1">Amino-acid biosynthesis; L-lysine biosynthesis via DAP pathway; LL-2,6-diaminopimelate from (S)-tetrahydrodipicolinate (acetylase route): step 1/3.</text>
</comment>
<comment type="similarity">
    <text evidence="1">Belongs to the transferase hexapeptide repeat family. DapH subfamily.</text>
</comment>
<accession>A7Z432</accession>
<name>DAPH_BACVZ</name>
<feature type="chain" id="PRO_0000376624" description="2,3,4,5-tetrahydropyridine-2,6-dicarboxylate N-acetyltransferase">
    <location>
        <begin position="1"/>
        <end position="236"/>
    </location>
</feature>
<evidence type="ECO:0000255" key="1">
    <source>
        <dbReference type="HAMAP-Rule" id="MF_01691"/>
    </source>
</evidence>
<gene>
    <name evidence="1" type="primary">dapH</name>
    <name type="ordered locus">RBAM_013950</name>
</gene>
<reference key="1">
    <citation type="journal article" date="2007" name="Nat. Biotechnol.">
        <title>Comparative analysis of the complete genome sequence of the plant growth-promoting bacterium Bacillus amyloliquefaciens FZB42.</title>
        <authorList>
            <person name="Chen X.H."/>
            <person name="Koumoutsi A."/>
            <person name="Scholz R."/>
            <person name="Eisenreich A."/>
            <person name="Schneider K."/>
            <person name="Heinemeyer I."/>
            <person name="Morgenstern B."/>
            <person name="Voss B."/>
            <person name="Hess W.R."/>
            <person name="Reva O."/>
            <person name="Junge H."/>
            <person name="Voigt B."/>
            <person name="Jungblut P.R."/>
            <person name="Vater J."/>
            <person name="Suessmuth R."/>
            <person name="Liesegang H."/>
            <person name="Strittmatter A."/>
            <person name="Gottschalk G."/>
            <person name="Borriss R."/>
        </authorList>
    </citation>
    <scope>NUCLEOTIDE SEQUENCE [LARGE SCALE GENOMIC DNA]</scope>
    <source>
        <strain>DSM 23117 / BGSC 10A6 / LMG 26770 / FZB42</strain>
    </source>
</reference>
<organism>
    <name type="scientific">Bacillus velezensis (strain DSM 23117 / BGSC 10A6 / LMG 26770 / FZB42)</name>
    <name type="common">Bacillus amyloliquefaciens subsp. plantarum</name>
    <dbReference type="NCBI Taxonomy" id="326423"/>
    <lineage>
        <taxon>Bacteria</taxon>
        <taxon>Bacillati</taxon>
        <taxon>Bacillota</taxon>
        <taxon>Bacilli</taxon>
        <taxon>Bacillales</taxon>
        <taxon>Bacillaceae</taxon>
        <taxon>Bacillus</taxon>
        <taxon>Bacillus amyloliquefaciens group</taxon>
    </lineage>
</organism>
<proteinExistence type="inferred from homology"/>
<protein>
    <recommendedName>
        <fullName evidence="1">2,3,4,5-tetrahydropyridine-2,6-dicarboxylate N-acetyltransferase</fullName>
        <ecNumber evidence="1">2.3.1.89</ecNumber>
    </recommendedName>
    <alternativeName>
        <fullName evidence="1">Tetrahydrodipicolinate N-acetyltransferase</fullName>
        <shortName evidence="1">THP acetyltransferase</shortName>
        <shortName evidence="1">Tetrahydropicolinate acetylase</shortName>
    </alternativeName>
</protein>
<dbReference type="EC" id="2.3.1.89" evidence="1"/>
<dbReference type="EMBL" id="CP000560">
    <property type="protein sequence ID" value="ABS73758.1"/>
    <property type="molecule type" value="Genomic_DNA"/>
</dbReference>
<dbReference type="SMR" id="A7Z432"/>
<dbReference type="GeneID" id="93080529"/>
<dbReference type="KEGG" id="bay:RBAM_013950"/>
<dbReference type="HOGENOM" id="CLU_103751_0_0_9"/>
<dbReference type="UniPathway" id="UPA00034">
    <property type="reaction ID" value="UER00022"/>
</dbReference>
<dbReference type="Proteomes" id="UP000001120">
    <property type="component" value="Chromosome"/>
</dbReference>
<dbReference type="GO" id="GO:0047200">
    <property type="term" value="F:tetrahydrodipicolinate N-acetyltransferase activity"/>
    <property type="evidence" value="ECO:0007669"/>
    <property type="project" value="UniProtKB-EC"/>
</dbReference>
<dbReference type="GO" id="GO:0019877">
    <property type="term" value="P:diaminopimelate biosynthetic process"/>
    <property type="evidence" value="ECO:0007669"/>
    <property type="project" value="UniProtKB-UniRule"/>
</dbReference>
<dbReference type="GO" id="GO:0009089">
    <property type="term" value="P:lysine biosynthetic process via diaminopimelate"/>
    <property type="evidence" value="ECO:0007669"/>
    <property type="project" value="UniProtKB-UniRule"/>
</dbReference>
<dbReference type="CDD" id="cd03350">
    <property type="entry name" value="LbH_THP_succinylT"/>
    <property type="match status" value="1"/>
</dbReference>
<dbReference type="Gene3D" id="2.160.10.10">
    <property type="entry name" value="Hexapeptide repeat proteins"/>
    <property type="match status" value="1"/>
</dbReference>
<dbReference type="Gene3D" id="3.30.70.250">
    <property type="entry name" value="Malonyl-CoA ACP transacylase, ACP-binding"/>
    <property type="match status" value="1"/>
</dbReference>
<dbReference type="HAMAP" id="MF_01691">
    <property type="entry name" value="DapH"/>
    <property type="match status" value="1"/>
</dbReference>
<dbReference type="InterPro" id="IPR019873">
    <property type="entry name" value="DapH"/>
</dbReference>
<dbReference type="InterPro" id="IPR013710">
    <property type="entry name" value="DapH_N"/>
</dbReference>
<dbReference type="InterPro" id="IPR001451">
    <property type="entry name" value="Hexapep"/>
</dbReference>
<dbReference type="InterPro" id="IPR018357">
    <property type="entry name" value="Hexapep_transf_CS"/>
</dbReference>
<dbReference type="InterPro" id="IPR050179">
    <property type="entry name" value="Trans_hexapeptide_repeat"/>
</dbReference>
<dbReference type="InterPro" id="IPR011004">
    <property type="entry name" value="Trimer_LpxA-like_sf"/>
</dbReference>
<dbReference type="NCBIfam" id="TIGR03532">
    <property type="entry name" value="DapD_Ac"/>
    <property type="match status" value="1"/>
</dbReference>
<dbReference type="PANTHER" id="PTHR43300:SF10">
    <property type="entry name" value="2,3,4,5-TETRAHYDROPYRIDINE-2,6-DICARBOXYLATE N-ACETYLTRANSFERASE"/>
    <property type="match status" value="1"/>
</dbReference>
<dbReference type="PANTHER" id="PTHR43300">
    <property type="entry name" value="ACETYLTRANSFERASE"/>
    <property type="match status" value="1"/>
</dbReference>
<dbReference type="Pfam" id="PF08503">
    <property type="entry name" value="DapH_N"/>
    <property type="match status" value="1"/>
</dbReference>
<dbReference type="Pfam" id="PF00132">
    <property type="entry name" value="Hexapep"/>
    <property type="match status" value="1"/>
</dbReference>
<dbReference type="Pfam" id="PF14602">
    <property type="entry name" value="Hexapep_2"/>
    <property type="match status" value="1"/>
</dbReference>
<dbReference type="SUPFAM" id="SSF51161">
    <property type="entry name" value="Trimeric LpxA-like enzymes"/>
    <property type="match status" value="1"/>
</dbReference>
<dbReference type="PROSITE" id="PS00101">
    <property type="entry name" value="HEXAPEP_TRANSFERASES"/>
    <property type="match status" value="1"/>
</dbReference>
<sequence length="236" mass="24963">MKMMDANEIISFIQNSTKSTPVKVYVKGDLEGISFGDSAKTFLNGQSGVVFGEWAEIKSVIEENKDKIEDYVIENDRRNSAIPMLDLKDVKARIEPGAIIRDQVEIGDNAVIMMGASINIGSVIGEGTMIDMNVVLGGRATVGKNCHIGAGSVLAGVIEPPSAKPVVVEDDVVIGANAVVLEGVTIGKGAVVAAGAIVVNDVEPYTVVAGTPAKKIKDIDEKTKGKTEIKQELRQL</sequence>
<keyword id="KW-0012">Acyltransferase</keyword>
<keyword id="KW-0028">Amino-acid biosynthesis</keyword>
<keyword id="KW-0220">Diaminopimelate biosynthesis</keyword>
<keyword id="KW-0457">Lysine biosynthesis</keyword>
<keyword id="KW-0677">Repeat</keyword>
<keyword id="KW-0808">Transferase</keyword>